<evidence type="ECO:0000255" key="1">
    <source>
        <dbReference type="HAMAP-Rule" id="MF_00362"/>
    </source>
</evidence>
<evidence type="ECO:0000305" key="2"/>
<feature type="chain" id="PRO_0000234898" description="Large ribosomal subunit protein uL10">
    <location>
        <begin position="1"/>
        <end position="187"/>
    </location>
</feature>
<protein>
    <recommendedName>
        <fullName evidence="1">Large ribosomal subunit protein uL10</fullName>
    </recommendedName>
    <alternativeName>
        <fullName evidence="2">50S ribosomal protein L10</fullName>
    </alternativeName>
</protein>
<gene>
    <name evidence="1" type="primary">rplJ</name>
    <name evidence="1" type="synonym">rpl10</name>
    <name type="ordered locus">CYB_1223</name>
</gene>
<dbReference type="EMBL" id="CP000240">
    <property type="protein sequence ID" value="ABD02198.1"/>
    <property type="molecule type" value="Genomic_DNA"/>
</dbReference>
<dbReference type="RefSeq" id="WP_011432851.1">
    <property type="nucleotide sequence ID" value="NC_007776.1"/>
</dbReference>
<dbReference type="SMR" id="Q2JM49"/>
<dbReference type="STRING" id="321332.CYB_1223"/>
<dbReference type="KEGG" id="cyb:CYB_1223"/>
<dbReference type="eggNOG" id="COG0244">
    <property type="taxonomic scope" value="Bacteria"/>
</dbReference>
<dbReference type="HOGENOM" id="CLU_092227_1_1_3"/>
<dbReference type="OrthoDB" id="9808307at2"/>
<dbReference type="Proteomes" id="UP000001938">
    <property type="component" value="Chromosome"/>
</dbReference>
<dbReference type="GO" id="GO:0015934">
    <property type="term" value="C:large ribosomal subunit"/>
    <property type="evidence" value="ECO:0007669"/>
    <property type="project" value="InterPro"/>
</dbReference>
<dbReference type="GO" id="GO:0070180">
    <property type="term" value="F:large ribosomal subunit rRNA binding"/>
    <property type="evidence" value="ECO:0007669"/>
    <property type="project" value="UniProtKB-UniRule"/>
</dbReference>
<dbReference type="GO" id="GO:0003735">
    <property type="term" value="F:structural constituent of ribosome"/>
    <property type="evidence" value="ECO:0007669"/>
    <property type="project" value="InterPro"/>
</dbReference>
<dbReference type="GO" id="GO:0006412">
    <property type="term" value="P:translation"/>
    <property type="evidence" value="ECO:0007669"/>
    <property type="project" value="UniProtKB-UniRule"/>
</dbReference>
<dbReference type="CDD" id="cd05797">
    <property type="entry name" value="Ribosomal_L10"/>
    <property type="match status" value="1"/>
</dbReference>
<dbReference type="Gene3D" id="3.30.70.1730">
    <property type="match status" value="1"/>
</dbReference>
<dbReference type="Gene3D" id="6.10.250.290">
    <property type="match status" value="1"/>
</dbReference>
<dbReference type="HAMAP" id="MF_00362">
    <property type="entry name" value="Ribosomal_uL10"/>
    <property type="match status" value="1"/>
</dbReference>
<dbReference type="InterPro" id="IPR001790">
    <property type="entry name" value="Ribosomal_uL10"/>
</dbReference>
<dbReference type="InterPro" id="IPR043141">
    <property type="entry name" value="Ribosomal_uL10-like_sf"/>
</dbReference>
<dbReference type="InterPro" id="IPR022973">
    <property type="entry name" value="Ribosomal_uL10_bac"/>
</dbReference>
<dbReference type="InterPro" id="IPR047865">
    <property type="entry name" value="Ribosomal_uL10_bac_type"/>
</dbReference>
<dbReference type="InterPro" id="IPR002363">
    <property type="entry name" value="Ribosomal_uL10_CS_bac"/>
</dbReference>
<dbReference type="NCBIfam" id="NF000955">
    <property type="entry name" value="PRK00099.1-1"/>
    <property type="match status" value="1"/>
</dbReference>
<dbReference type="PANTHER" id="PTHR11560">
    <property type="entry name" value="39S RIBOSOMAL PROTEIN L10, MITOCHONDRIAL"/>
    <property type="match status" value="1"/>
</dbReference>
<dbReference type="Pfam" id="PF00466">
    <property type="entry name" value="Ribosomal_L10"/>
    <property type="match status" value="1"/>
</dbReference>
<dbReference type="SUPFAM" id="SSF160369">
    <property type="entry name" value="Ribosomal protein L10-like"/>
    <property type="match status" value="1"/>
</dbReference>
<dbReference type="PROSITE" id="PS01109">
    <property type="entry name" value="RIBOSOMAL_L10"/>
    <property type="match status" value="1"/>
</dbReference>
<keyword id="KW-1185">Reference proteome</keyword>
<keyword id="KW-0687">Ribonucleoprotein</keyword>
<keyword id="KW-0689">Ribosomal protein</keyword>
<keyword id="KW-0694">RNA-binding</keyword>
<keyword id="KW-0699">rRNA-binding</keyword>
<sequence length="187" mass="19934">MGKQPLAKKAEIVDKVRSLLQASQMVLVIDYKGLTVAEMDQLRAELRKSDSVCMVVKNTLMRRAIADQKAWAGIIPFLAGPTAFILIRGDISAALKAYQDFAKQTKKTEFRGAGIEGLSLTLEQAKAIAELPPKEVLMAQVAGSLKSVATGLAVGLNAVPTQVARGIHEIPASLGRAIRAIADKEAA</sequence>
<name>RL10_SYNJB</name>
<organism>
    <name type="scientific">Synechococcus sp. (strain JA-2-3B'a(2-13))</name>
    <name type="common">Cyanobacteria bacterium Yellowstone B-Prime</name>
    <dbReference type="NCBI Taxonomy" id="321332"/>
    <lineage>
        <taxon>Bacteria</taxon>
        <taxon>Bacillati</taxon>
        <taxon>Cyanobacteriota</taxon>
        <taxon>Cyanophyceae</taxon>
        <taxon>Synechococcales</taxon>
        <taxon>Synechococcaceae</taxon>
        <taxon>Synechococcus</taxon>
    </lineage>
</organism>
<reference key="1">
    <citation type="journal article" date="2007" name="ISME J.">
        <title>Population level functional diversity in a microbial community revealed by comparative genomic and metagenomic analyses.</title>
        <authorList>
            <person name="Bhaya D."/>
            <person name="Grossman A.R."/>
            <person name="Steunou A.-S."/>
            <person name="Khuri N."/>
            <person name="Cohan F.M."/>
            <person name="Hamamura N."/>
            <person name="Melendrez M.C."/>
            <person name="Bateson M.M."/>
            <person name="Ward D.M."/>
            <person name="Heidelberg J.F."/>
        </authorList>
    </citation>
    <scope>NUCLEOTIDE SEQUENCE [LARGE SCALE GENOMIC DNA]</scope>
    <source>
        <strain>JA-2-3B'a(2-13)</strain>
    </source>
</reference>
<comment type="function">
    <text evidence="1">Forms part of the ribosomal stalk, playing a central role in the interaction of the ribosome with GTP-bound translation factors.</text>
</comment>
<comment type="subunit">
    <text evidence="1">Part of the ribosomal stalk of the 50S ribosomal subunit. The N-terminus interacts with L11 and the large rRNA to form the base of the stalk. The C-terminus forms an elongated spine to which L12 dimers bind in a sequential fashion forming a multimeric L10(L12)X complex.</text>
</comment>
<comment type="similarity">
    <text evidence="1">Belongs to the universal ribosomal protein uL10 family.</text>
</comment>
<proteinExistence type="inferred from homology"/>
<accession>Q2JM49</accession>